<feature type="chain" id="PRO_0000095518" description="Glutamate racemase">
    <location>
        <begin position="1"/>
        <end position="264"/>
    </location>
</feature>
<feature type="active site" description="Proton donor/acceptor" evidence="1">
    <location>
        <position position="73"/>
    </location>
</feature>
<feature type="active site" description="Proton donor/acceptor" evidence="1">
    <location>
        <position position="183"/>
    </location>
</feature>
<feature type="binding site" evidence="1">
    <location>
        <begin position="10"/>
        <end position="11"/>
    </location>
    <ligand>
        <name>substrate</name>
    </ligand>
</feature>
<feature type="binding site" evidence="1">
    <location>
        <begin position="42"/>
        <end position="43"/>
    </location>
    <ligand>
        <name>substrate</name>
    </ligand>
</feature>
<feature type="binding site" evidence="1">
    <location>
        <begin position="74"/>
        <end position="75"/>
    </location>
    <ligand>
        <name>substrate</name>
    </ligand>
</feature>
<feature type="binding site" evidence="1">
    <location>
        <begin position="184"/>
        <end position="185"/>
    </location>
    <ligand>
        <name>substrate</name>
    </ligand>
</feature>
<keyword id="KW-0133">Cell shape</keyword>
<keyword id="KW-0961">Cell wall biogenesis/degradation</keyword>
<keyword id="KW-0413">Isomerase</keyword>
<keyword id="KW-0573">Peptidoglycan synthesis</keyword>
<keyword id="KW-1185">Reference proteome</keyword>
<accession>Q8DSQ5</accession>
<protein>
    <recommendedName>
        <fullName evidence="1">Glutamate racemase</fullName>
        <ecNumber evidence="1">5.1.1.3</ecNumber>
    </recommendedName>
</protein>
<evidence type="ECO:0000255" key="1">
    <source>
        <dbReference type="HAMAP-Rule" id="MF_00258"/>
    </source>
</evidence>
<dbReference type="EC" id="5.1.1.3" evidence="1"/>
<dbReference type="EMBL" id="AE014133">
    <property type="protein sequence ID" value="AAN59353.1"/>
    <property type="molecule type" value="Genomic_DNA"/>
</dbReference>
<dbReference type="RefSeq" id="NP_722047.1">
    <property type="nucleotide sequence ID" value="NC_004350.2"/>
</dbReference>
<dbReference type="SMR" id="Q8DSQ5"/>
<dbReference type="STRING" id="210007.SMU_1718"/>
<dbReference type="KEGG" id="smu:SMU_1718"/>
<dbReference type="PATRIC" id="fig|210007.7.peg.1536"/>
<dbReference type="eggNOG" id="COG0796">
    <property type="taxonomic scope" value="Bacteria"/>
</dbReference>
<dbReference type="HOGENOM" id="CLU_052344_0_2_9"/>
<dbReference type="OrthoDB" id="9801055at2"/>
<dbReference type="PhylomeDB" id="Q8DSQ5"/>
<dbReference type="BRENDA" id="5.1.1.3">
    <property type="organism ID" value="14748"/>
</dbReference>
<dbReference type="UniPathway" id="UPA00219"/>
<dbReference type="Proteomes" id="UP000002512">
    <property type="component" value="Chromosome"/>
</dbReference>
<dbReference type="GO" id="GO:0008881">
    <property type="term" value="F:glutamate racemase activity"/>
    <property type="evidence" value="ECO:0007669"/>
    <property type="project" value="UniProtKB-UniRule"/>
</dbReference>
<dbReference type="GO" id="GO:0071555">
    <property type="term" value="P:cell wall organization"/>
    <property type="evidence" value="ECO:0007669"/>
    <property type="project" value="UniProtKB-KW"/>
</dbReference>
<dbReference type="GO" id="GO:0009252">
    <property type="term" value="P:peptidoglycan biosynthetic process"/>
    <property type="evidence" value="ECO:0007669"/>
    <property type="project" value="UniProtKB-UniRule"/>
</dbReference>
<dbReference type="GO" id="GO:0008360">
    <property type="term" value="P:regulation of cell shape"/>
    <property type="evidence" value="ECO:0007669"/>
    <property type="project" value="UniProtKB-KW"/>
</dbReference>
<dbReference type="FunFam" id="3.40.50.1860:FF:000002">
    <property type="entry name" value="Glutamate racemase"/>
    <property type="match status" value="1"/>
</dbReference>
<dbReference type="Gene3D" id="3.40.50.1860">
    <property type="match status" value="2"/>
</dbReference>
<dbReference type="HAMAP" id="MF_00258">
    <property type="entry name" value="Glu_racemase"/>
    <property type="match status" value="1"/>
</dbReference>
<dbReference type="InterPro" id="IPR015942">
    <property type="entry name" value="Asp/Glu/hydantoin_racemase"/>
</dbReference>
<dbReference type="InterPro" id="IPR001920">
    <property type="entry name" value="Asp/Glu_race"/>
</dbReference>
<dbReference type="InterPro" id="IPR033134">
    <property type="entry name" value="Asp/Glu_racemase_AS_2"/>
</dbReference>
<dbReference type="InterPro" id="IPR004391">
    <property type="entry name" value="Glu_race"/>
</dbReference>
<dbReference type="NCBIfam" id="TIGR00067">
    <property type="entry name" value="glut_race"/>
    <property type="match status" value="1"/>
</dbReference>
<dbReference type="NCBIfam" id="NF002035">
    <property type="entry name" value="PRK00865.1-3"/>
    <property type="match status" value="1"/>
</dbReference>
<dbReference type="PANTHER" id="PTHR21198">
    <property type="entry name" value="GLUTAMATE RACEMASE"/>
    <property type="match status" value="1"/>
</dbReference>
<dbReference type="PANTHER" id="PTHR21198:SF2">
    <property type="entry name" value="GLUTAMATE RACEMASE"/>
    <property type="match status" value="1"/>
</dbReference>
<dbReference type="Pfam" id="PF01177">
    <property type="entry name" value="Asp_Glu_race"/>
    <property type="match status" value="1"/>
</dbReference>
<dbReference type="SUPFAM" id="SSF53681">
    <property type="entry name" value="Aspartate/glutamate racemase"/>
    <property type="match status" value="2"/>
</dbReference>
<dbReference type="PROSITE" id="PS00924">
    <property type="entry name" value="ASP_GLU_RACEMASE_2"/>
    <property type="match status" value="1"/>
</dbReference>
<sequence length="264" mass="29264">MDNRPIGFLDSGVGGLTVVRELMRQLPHEEVIYIGDSARAPYGPRPAKQIKTYTWELVNFLLTKKVKMIVFACNTATAVVWEEVKEKLDIPVLGVILPGSSAAIKSTISGQIGIIGTPMTIKSNIYEQKIRDLSPQMKVRSLACPKFVPIVESNKMNSSVAKKIVYESLSPLVGKIDTLVLGCTHYPLLRPIIQNVMGPDVELIDSGAECVRDISVLLNYFDLNRSRTSKVLHHRFYTTASVASFKEIASDWLPLAIEVEHVTL</sequence>
<organism>
    <name type="scientific">Streptococcus mutans serotype c (strain ATCC 700610 / UA159)</name>
    <dbReference type="NCBI Taxonomy" id="210007"/>
    <lineage>
        <taxon>Bacteria</taxon>
        <taxon>Bacillati</taxon>
        <taxon>Bacillota</taxon>
        <taxon>Bacilli</taxon>
        <taxon>Lactobacillales</taxon>
        <taxon>Streptococcaceae</taxon>
        <taxon>Streptococcus</taxon>
    </lineage>
</organism>
<gene>
    <name evidence="1" type="primary">murI</name>
    <name type="ordered locus">SMU_1718</name>
</gene>
<comment type="function">
    <text evidence="1">Provides the (R)-glutamate required for cell wall biosynthesis.</text>
</comment>
<comment type="catalytic activity">
    <reaction evidence="1">
        <text>L-glutamate = D-glutamate</text>
        <dbReference type="Rhea" id="RHEA:12813"/>
        <dbReference type="ChEBI" id="CHEBI:29985"/>
        <dbReference type="ChEBI" id="CHEBI:29986"/>
        <dbReference type="EC" id="5.1.1.3"/>
    </reaction>
</comment>
<comment type="pathway">
    <text evidence="1">Cell wall biogenesis; peptidoglycan biosynthesis.</text>
</comment>
<comment type="similarity">
    <text evidence="1">Belongs to the aspartate/glutamate racemases family.</text>
</comment>
<proteinExistence type="inferred from homology"/>
<reference key="1">
    <citation type="journal article" date="2002" name="Proc. Natl. Acad. Sci. U.S.A.">
        <title>Genome sequence of Streptococcus mutans UA159, a cariogenic dental pathogen.</title>
        <authorList>
            <person name="Ajdic D.J."/>
            <person name="McShan W.M."/>
            <person name="McLaughlin R.E."/>
            <person name="Savic G."/>
            <person name="Chang J."/>
            <person name="Carson M.B."/>
            <person name="Primeaux C."/>
            <person name="Tian R."/>
            <person name="Kenton S."/>
            <person name="Jia H.G."/>
            <person name="Lin S.P."/>
            <person name="Qian Y."/>
            <person name="Li S."/>
            <person name="Zhu H."/>
            <person name="Najar F.Z."/>
            <person name="Lai H."/>
            <person name="White J."/>
            <person name="Roe B.A."/>
            <person name="Ferretti J.J."/>
        </authorList>
    </citation>
    <scope>NUCLEOTIDE SEQUENCE [LARGE SCALE GENOMIC DNA]</scope>
    <source>
        <strain>ATCC 700610 / UA159</strain>
    </source>
</reference>
<name>MURI_STRMU</name>